<name>CAN_SCHMA</name>
<feature type="chain" id="PRO_0000207735" description="Calpain">
    <location>
        <begin position="1"/>
        <end position="758"/>
    </location>
</feature>
<feature type="domain" description="Calpain catalytic" evidence="2">
    <location>
        <begin position="99"/>
        <end position="397"/>
    </location>
</feature>
<feature type="domain" description="EF-hand 1" evidence="3">
    <location>
        <begin position="658"/>
        <end position="693"/>
    </location>
</feature>
<feature type="domain" description="EF-hand 2" evidence="3">
    <location>
        <begin position="694"/>
        <end position="729"/>
    </location>
</feature>
<feature type="region of interest" description="Domain III">
    <location>
        <begin position="398"/>
        <end position="562"/>
    </location>
</feature>
<feature type="region of interest" description="Linker">
    <location>
        <begin position="563"/>
        <end position="582"/>
    </location>
</feature>
<feature type="region of interest" description="Domain IV">
    <location>
        <begin position="583"/>
        <end position="757"/>
    </location>
</feature>
<feature type="active site" evidence="1">
    <location>
        <position position="154"/>
    </location>
</feature>
<feature type="active site" evidence="1">
    <location>
        <position position="313"/>
    </location>
</feature>
<feature type="active site" evidence="1">
    <location>
        <position position="337"/>
    </location>
</feature>
<feature type="binding site" evidence="4">
    <location>
        <position position="641"/>
    </location>
    <ligand>
        <name>Ca(2+)</name>
        <dbReference type="ChEBI" id="CHEBI:29108"/>
        <label>1</label>
    </ligand>
</feature>
<feature type="binding site" evidence="4">
    <location>
        <position position="643"/>
    </location>
    <ligand>
        <name>Ca(2+)</name>
        <dbReference type="ChEBI" id="CHEBI:29108"/>
        <label>1</label>
    </ligand>
</feature>
<feature type="binding site" evidence="4">
    <location>
        <position position="645"/>
    </location>
    <ligand>
        <name>Ca(2+)</name>
        <dbReference type="ChEBI" id="CHEBI:29108"/>
        <label>1</label>
    </ligand>
</feature>
<feature type="binding site" evidence="4">
    <location>
        <position position="647"/>
    </location>
    <ligand>
        <name>Ca(2+)</name>
        <dbReference type="ChEBI" id="CHEBI:29108"/>
        <label>1</label>
    </ligand>
</feature>
<feature type="binding site" evidence="4">
    <location>
        <position position="652"/>
    </location>
    <ligand>
        <name>Ca(2+)</name>
        <dbReference type="ChEBI" id="CHEBI:29108"/>
        <label>1</label>
    </ligand>
</feature>
<feature type="binding site" evidence="4">
    <location>
        <position position="671"/>
    </location>
    <ligand>
        <name>Ca(2+)</name>
        <dbReference type="ChEBI" id="CHEBI:29108"/>
        <label>2</label>
    </ligand>
</feature>
<feature type="binding site" evidence="4">
    <location>
        <position position="673"/>
    </location>
    <ligand>
        <name>Ca(2+)</name>
        <dbReference type="ChEBI" id="CHEBI:29108"/>
        <label>2</label>
    </ligand>
</feature>
<feature type="binding site" evidence="4">
    <location>
        <position position="675"/>
    </location>
    <ligand>
        <name>Ca(2+)</name>
        <dbReference type="ChEBI" id="CHEBI:29108"/>
        <label>2</label>
    </ligand>
</feature>
<feature type="binding site" evidence="4">
    <location>
        <position position="677"/>
    </location>
    <ligand>
        <name>Ca(2+)</name>
        <dbReference type="ChEBI" id="CHEBI:29108"/>
        <label>2</label>
    </ligand>
</feature>
<feature type="binding site" evidence="4">
    <location>
        <position position="682"/>
    </location>
    <ligand>
        <name>Ca(2+)</name>
        <dbReference type="ChEBI" id="CHEBI:29108"/>
        <label>2</label>
    </ligand>
</feature>
<feature type="sequence conflict" description="In Ref. 2; AAA29858." evidence="4" ref="2">
    <original>H</original>
    <variation>L</variation>
    <location>
        <position position="128"/>
    </location>
</feature>
<feature type="sequence conflict" description="In Ref. 2; AAA29858." evidence="4" ref="2">
    <original>R</original>
    <variation>L</variation>
    <location>
        <position position="214"/>
    </location>
</feature>
<feature type="sequence conflict" description="In Ref. 2; AAA29858." evidence="4" ref="2">
    <original>VTC</original>
    <variation>CYL</variation>
    <location>
        <begin position="385"/>
        <end position="387"/>
    </location>
</feature>
<feature type="sequence conflict" description="In Ref. 2; AAA29858." evidence="4" ref="2">
    <original>S</original>
    <variation>N</variation>
    <location>
        <position position="441"/>
    </location>
</feature>
<feature type="sequence conflict" description="In Ref. 2." evidence="4" ref="2">
    <original>S</original>
    <variation>R</variation>
    <location>
        <position position="755"/>
    </location>
</feature>
<feature type="sequence conflict" description="In Ref. 2." evidence="4" ref="2">
    <original>Y</original>
    <variation>D</variation>
    <location>
        <position position="757"/>
    </location>
</feature>
<proteinExistence type="evidence at transcript level"/>
<protein>
    <recommendedName>
        <fullName>Calpain</fullName>
        <ecNumber>3.4.22.-</ecNumber>
    </recommendedName>
    <alternativeName>
        <fullName>Calcium-activated neutral proteinase</fullName>
        <shortName>CANP</shortName>
    </alternativeName>
</protein>
<reference key="1">
    <citation type="journal article" date="1991" name="Mol. Biochem. Parasitol.">
        <title>Molecular cloning and sequence analysis of a calcium-activated neutral protease (calpain) from Schistosoma mansoni.</title>
        <authorList>
            <person name="Karcz S.R."/>
            <person name="Podesta R.B."/>
            <person name="Siddiqui A.A."/>
            <person name="Dekaban G.A."/>
            <person name="Strejan G.H."/>
            <person name="Clarke M.W."/>
        </authorList>
    </citation>
    <scope>NUCLEOTIDE SEQUENCE [MRNA]</scope>
</reference>
<reference key="2">
    <citation type="journal article" date="1991" name="J. Biol. Chem.">
        <title>Characterization of cDNA clones encoding a novel calcium-activated neutral proteinase from Schistosoma mansoni.</title>
        <authorList>
            <person name="Andresen K."/>
            <person name="Tom T.D."/>
            <person name="Strand M."/>
        </authorList>
    </citation>
    <scope>NUCLEOTIDE SEQUENCE [MRNA]</scope>
    <source>
        <strain>Puerto Rican</strain>
    </source>
</reference>
<accession>P27730</accession>
<dbReference type="EC" id="3.4.22.-"/>
<dbReference type="EMBL" id="M74233">
    <property type="protein sequence ID" value="AAA29857.1"/>
    <property type="molecule type" value="mRNA"/>
</dbReference>
<dbReference type="EMBL" id="M67499">
    <property type="protein sequence ID" value="AAA29858.1"/>
    <property type="molecule type" value="mRNA"/>
</dbReference>
<dbReference type="PIR" id="A39343">
    <property type="entry name" value="A39343"/>
</dbReference>
<dbReference type="SMR" id="P27730"/>
<dbReference type="STRING" id="6183.P27730"/>
<dbReference type="MEROPS" id="C02.023"/>
<dbReference type="eggNOG" id="KOG0045">
    <property type="taxonomic scope" value="Eukaryota"/>
</dbReference>
<dbReference type="HOGENOM" id="CLU_244471_0_0_1"/>
<dbReference type="InParanoid" id="P27730"/>
<dbReference type="Proteomes" id="UP000008854">
    <property type="component" value="Unassembled WGS sequence"/>
</dbReference>
<dbReference type="GO" id="GO:0005737">
    <property type="term" value="C:cytoplasm"/>
    <property type="evidence" value="ECO:0007669"/>
    <property type="project" value="TreeGrafter"/>
</dbReference>
<dbReference type="GO" id="GO:0005509">
    <property type="term" value="F:calcium ion binding"/>
    <property type="evidence" value="ECO:0007669"/>
    <property type="project" value="InterPro"/>
</dbReference>
<dbReference type="GO" id="GO:0004198">
    <property type="term" value="F:calcium-dependent cysteine-type endopeptidase activity"/>
    <property type="evidence" value="ECO:0007669"/>
    <property type="project" value="InterPro"/>
</dbReference>
<dbReference type="GO" id="GO:0006508">
    <property type="term" value="P:proteolysis"/>
    <property type="evidence" value="ECO:0007669"/>
    <property type="project" value="UniProtKB-KW"/>
</dbReference>
<dbReference type="CDD" id="cd00214">
    <property type="entry name" value="Calpain_III"/>
    <property type="match status" value="1"/>
</dbReference>
<dbReference type="CDD" id="cd00044">
    <property type="entry name" value="CysPc"/>
    <property type="match status" value="1"/>
</dbReference>
<dbReference type="CDD" id="cd16182">
    <property type="entry name" value="EFh_PEF_Group_II_CAPN_like"/>
    <property type="match status" value="1"/>
</dbReference>
<dbReference type="FunFam" id="2.60.120.380:FF:000001">
    <property type="entry name" value="Calpain-1 catalytic subunit"/>
    <property type="match status" value="1"/>
</dbReference>
<dbReference type="FunFam" id="3.90.70.10:FF:000001">
    <property type="entry name" value="Calpain-1 catalytic subunit"/>
    <property type="match status" value="1"/>
</dbReference>
<dbReference type="Gene3D" id="2.60.120.380">
    <property type="match status" value="1"/>
</dbReference>
<dbReference type="Gene3D" id="3.90.70.10">
    <property type="entry name" value="Cysteine proteinases"/>
    <property type="match status" value="1"/>
</dbReference>
<dbReference type="Gene3D" id="1.10.238.10">
    <property type="entry name" value="EF-hand"/>
    <property type="match status" value="1"/>
</dbReference>
<dbReference type="InterPro" id="IPR033883">
    <property type="entry name" value="C2_III"/>
</dbReference>
<dbReference type="InterPro" id="IPR022684">
    <property type="entry name" value="Calpain_cysteine_protease"/>
</dbReference>
<dbReference type="InterPro" id="IPR022682">
    <property type="entry name" value="Calpain_domain_III"/>
</dbReference>
<dbReference type="InterPro" id="IPR022683">
    <property type="entry name" value="Calpain_III"/>
</dbReference>
<dbReference type="InterPro" id="IPR036213">
    <property type="entry name" value="Calpain_III_sf"/>
</dbReference>
<dbReference type="InterPro" id="IPR011992">
    <property type="entry name" value="EF-hand-dom_pair"/>
</dbReference>
<dbReference type="InterPro" id="IPR002048">
    <property type="entry name" value="EF_hand_dom"/>
</dbReference>
<dbReference type="InterPro" id="IPR038765">
    <property type="entry name" value="Papain-like_cys_pep_sf"/>
</dbReference>
<dbReference type="InterPro" id="IPR000169">
    <property type="entry name" value="Pept_cys_AS"/>
</dbReference>
<dbReference type="InterPro" id="IPR001300">
    <property type="entry name" value="Peptidase_C2_calpain_cat"/>
</dbReference>
<dbReference type="PANTHER" id="PTHR10183">
    <property type="entry name" value="CALPAIN"/>
    <property type="match status" value="1"/>
</dbReference>
<dbReference type="PANTHER" id="PTHR10183:SF433">
    <property type="entry name" value="CALPAIN-A-RELATED"/>
    <property type="match status" value="1"/>
</dbReference>
<dbReference type="Pfam" id="PF01067">
    <property type="entry name" value="Calpain_III"/>
    <property type="match status" value="1"/>
</dbReference>
<dbReference type="Pfam" id="PF00648">
    <property type="entry name" value="Peptidase_C2"/>
    <property type="match status" value="1"/>
</dbReference>
<dbReference type="PRINTS" id="PR00704">
    <property type="entry name" value="CALPAIN"/>
</dbReference>
<dbReference type="SMART" id="SM00720">
    <property type="entry name" value="calpain_III"/>
    <property type="match status" value="1"/>
</dbReference>
<dbReference type="SMART" id="SM00230">
    <property type="entry name" value="CysPc"/>
    <property type="match status" value="1"/>
</dbReference>
<dbReference type="SUPFAM" id="SSF49758">
    <property type="entry name" value="Calpain large subunit, middle domain (domain III)"/>
    <property type="match status" value="1"/>
</dbReference>
<dbReference type="SUPFAM" id="SSF54001">
    <property type="entry name" value="Cysteine proteinases"/>
    <property type="match status" value="1"/>
</dbReference>
<dbReference type="SUPFAM" id="SSF47473">
    <property type="entry name" value="EF-hand"/>
    <property type="match status" value="1"/>
</dbReference>
<dbReference type="PROSITE" id="PS50203">
    <property type="entry name" value="CALPAIN_CAT"/>
    <property type="match status" value="1"/>
</dbReference>
<dbReference type="PROSITE" id="PS50222">
    <property type="entry name" value="EF_HAND_2"/>
    <property type="match status" value="2"/>
</dbReference>
<dbReference type="PROSITE" id="PS00139">
    <property type="entry name" value="THIOL_PROTEASE_CYS"/>
    <property type="match status" value="1"/>
</dbReference>
<comment type="function">
    <text>Calpains are calcium-activated non-lysosomal thiol-proteases.</text>
</comment>
<comment type="activity regulation">
    <text>Activated by free cytoplasmic calcium.</text>
</comment>
<comment type="developmental stage">
    <text>In sporocysts and adult worms.</text>
</comment>
<comment type="miscellaneous">
    <text>This protein binds calcium.</text>
</comment>
<comment type="similarity">
    <text evidence="4">Belongs to the peptidase C2 family.</text>
</comment>
<organism>
    <name type="scientific">Schistosoma mansoni</name>
    <name type="common">Blood fluke</name>
    <dbReference type="NCBI Taxonomy" id="6183"/>
    <lineage>
        <taxon>Eukaryota</taxon>
        <taxon>Metazoa</taxon>
        <taxon>Spiralia</taxon>
        <taxon>Lophotrochozoa</taxon>
        <taxon>Platyhelminthes</taxon>
        <taxon>Trematoda</taxon>
        <taxon>Digenea</taxon>
        <taxon>Strigeidida</taxon>
        <taxon>Schistosomatoidea</taxon>
        <taxon>Schistosomatidae</taxon>
        <taxon>Schistosoma</taxon>
    </lineage>
</organism>
<keyword id="KW-0106">Calcium</keyword>
<keyword id="KW-0378">Hydrolase</keyword>
<keyword id="KW-0479">Metal-binding</keyword>
<keyword id="KW-0645">Protease</keyword>
<keyword id="KW-1185">Reference proteome</keyword>
<keyword id="KW-0677">Repeat</keyword>
<keyword id="KW-0788">Thiol protease</keyword>
<sequence>MGRIQIVYSPDENVSGRTNRPGKEVVDPRTGRIIKVKRETPDDYLNVLKPIKGPKRMEFNPYLPKTLTPKGYAKFKLMMNVASKQYETLVKRLKTERTLWEDPDFPANDKAIGNLPDFRERIEWKRPHEINPNAKFFAGGASRFDIEQGALGDCWLLAVVASISGYPQLFDQVVPKDQELKGPEYVGVVRFRFWRFGHWVEVLIDDRLPVRQGRNTLVFMHSNDPTEFWSALLEKAYAKLNGCYAHLSGGSQSEAMEDLTGGICLSLELNQKERPSDLIDQLKIYAQRCCLMGCSIDSSVMEQKMDNGLIGSHAYSLTGVYPVNYRGRTQWLMRLRNPWGDSHEWKGAWCDGSPQWREISEQEKKNINLSFTADGEFWMSYEDFVTCFSRVEVCHLGLESLEYNQNFHGKRRLDEAIFSGQWQRNVNAGGCINNRTTYWTSPQFRITVEDPDPDDDDNKCSVLIGLMQTDIRKKVGADFQPIGFMVYNAPDDLNTLLSRAQLLTRSPIAKSQFINTREVTAQFRVPPGSYVVIPSTFDPNIEVNFILRVFSQTSITEQELDEDNTNQGLPDDVIEALKLEDTLLDEDQEIEQKFLAIRDPKTNAINAVKLGELLNNSTLQDIPNFQGFNKELCRSMVASVDNNLTGHVELNEFMDLWIQAKGWKHIFIKHDVDQSGYFSAYEFREALNDAGYHVSNRLINAIINRYQDPGTDKISFEDFMLCMVRLKTAFETIEAHPKNIEGTSLFSAEDYLRFSVYI</sequence>
<evidence type="ECO:0000250" key="1"/>
<evidence type="ECO:0000255" key="2">
    <source>
        <dbReference type="PROSITE-ProRule" id="PRU00239"/>
    </source>
</evidence>
<evidence type="ECO:0000255" key="3">
    <source>
        <dbReference type="PROSITE-ProRule" id="PRU00448"/>
    </source>
</evidence>
<evidence type="ECO:0000305" key="4"/>